<organism>
    <name type="scientific">Drosophila melanogaster</name>
    <name type="common">Fruit fly</name>
    <dbReference type="NCBI Taxonomy" id="7227"/>
    <lineage>
        <taxon>Eukaryota</taxon>
        <taxon>Metazoa</taxon>
        <taxon>Ecdysozoa</taxon>
        <taxon>Arthropoda</taxon>
        <taxon>Hexapoda</taxon>
        <taxon>Insecta</taxon>
        <taxon>Pterygota</taxon>
        <taxon>Neoptera</taxon>
        <taxon>Endopterygota</taxon>
        <taxon>Diptera</taxon>
        <taxon>Brachycera</taxon>
        <taxon>Muscomorpha</taxon>
        <taxon>Ephydroidea</taxon>
        <taxon>Drosophilidae</taxon>
        <taxon>Drosophila</taxon>
        <taxon>Sophophora</taxon>
    </lineage>
</organism>
<feature type="chain" id="PRO_0000127142" description="Protein atonal">
    <location>
        <begin position="1"/>
        <end position="312"/>
    </location>
</feature>
<feature type="domain" description="bHLH" evidence="1">
    <location>
        <begin position="255"/>
        <end position="307"/>
    </location>
</feature>
<feature type="region of interest" description="Disordered" evidence="2">
    <location>
        <begin position="136"/>
        <end position="174"/>
    </location>
</feature>
<feature type="region of interest" description="Disordered" evidence="2">
    <location>
        <begin position="220"/>
        <end position="248"/>
    </location>
</feature>
<feature type="compositionally biased region" description="Low complexity" evidence="2">
    <location>
        <begin position="162"/>
        <end position="174"/>
    </location>
</feature>
<feature type="sequence variant" description="In strain: ZBMEL191.">
    <original>N</original>
    <variation>K</variation>
    <location>
        <position position="104"/>
    </location>
</feature>
<feature type="sequence variant" description="In strain: ZBMEL191.">
    <original>A</original>
    <variation>T</variation>
    <location>
        <position position="146"/>
    </location>
</feature>
<feature type="sequence variant" description="In strain: Oregon-R, ZBMEL84, ZBMEL95, ZBMEL131, ZBMEL157, ZBMEL186, ZBMEL191 and ZBMEL229.">
    <original>G</original>
    <variation>A</variation>
    <location>
        <position position="149"/>
    </location>
</feature>
<dbReference type="EMBL" id="L36646">
    <property type="protein sequence ID" value="AAA21879.1"/>
    <property type="molecule type" value="mRNA"/>
</dbReference>
<dbReference type="EMBL" id="AM294774">
    <property type="protein sequence ID" value="CAL26760.1"/>
    <property type="molecule type" value="Genomic_DNA"/>
</dbReference>
<dbReference type="EMBL" id="AM294775">
    <property type="protein sequence ID" value="CAL26761.1"/>
    <property type="molecule type" value="Genomic_DNA"/>
</dbReference>
<dbReference type="EMBL" id="AM294776">
    <property type="protein sequence ID" value="CAL26762.1"/>
    <property type="molecule type" value="Genomic_DNA"/>
</dbReference>
<dbReference type="EMBL" id="AM294777">
    <property type="protein sequence ID" value="CAL26763.1"/>
    <property type="molecule type" value="Genomic_DNA"/>
</dbReference>
<dbReference type="EMBL" id="AM294778">
    <property type="protein sequence ID" value="CAL26764.1"/>
    <property type="molecule type" value="Genomic_DNA"/>
</dbReference>
<dbReference type="EMBL" id="AM294779">
    <property type="protein sequence ID" value="CAL26765.1"/>
    <property type="molecule type" value="Genomic_DNA"/>
</dbReference>
<dbReference type="EMBL" id="AM294780">
    <property type="protein sequence ID" value="CAL26766.1"/>
    <property type="molecule type" value="Genomic_DNA"/>
</dbReference>
<dbReference type="EMBL" id="AM294781">
    <property type="protein sequence ID" value="CAL26767.1"/>
    <property type="molecule type" value="Genomic_DNA"/>
</dbReference>
<dbReference type="EMBL" id="AM294782">
    <property type="protein sequence ID" value="CAL26768.1"/>
    <property type="molecule type" value="Genomic_DNA"/>
</dbReference>
<dbReference type="EMBL" id="AM294783">
    <property type="protein sequence ID" value="CAL26769.1"/>
    <property type="molecule type" value="Genomic_DNA"/>
</dbReference>
<dbReference type="EMBL" id="AM294784">
    <property type="protein sequence ID" value="CAL26770.1"/>
    <property type="molecule type" value="Genomic_DNA"/>
</dbReference>
<dbReference type="EMBL" id="AM294785">
    <property type="protein sequence ID" value="CAL26771.1"/>
    <property type="molecule type" value="Genomic_DNA"/>
</dbReference>
<dbReference type="EMBL" id="AE014297">
    <property type="protein sequence ID" value="AAF54209.1"/>
    <property type="molecule type" value="Genomic_DNA"/>
</dbReference>
<dbReference type="PIR" id="A40708">
    <property type="entry name" value="A40708"/>
</dbReference>
<dbReference type="RefSeq" id="NP_731223.1">
    <property type="nucleotide sequence ID" value="NM_169213.2"/>
</dbReference>
<dbReference type="SMR" id="P48987"/>
<dbReference type="BioGRID" id="66156">
    <property type="interactions" value="34"/>
</dbReference>
<dbReference type="DIP" id="DIP-151N"/>
<dbReference type="FunCoup" id="P48987">
    <property type="interactions" value="29"/>
</dbReference>
<dbReference type="IntAct" id="P48987">
    <property type="interactions" value="8"/>
</dbReference>
<dbReference type="STRING" id="7227.FBpp0081318"/>
<dbReference type="PaxDb" id="7227-FBpp0081318"/>
<dbReference type="EnsemblMetazoa" id="FBtr0081828">
    <property type="protein sequence ID" value="FBpp0081318"/>
    <property type="gene ID" value="FBgn0010433"/>
</dbReference>
<dbReference type="GeneID" id="40975"/>
<dbReference type="KEGG" id="dme:Dmel_CG7508"/>
<dbReference type="UCSC" id="CG7508-RA">
    <property type="organism name" value="d. melanogaster"/>
</dbReference>
<dbReference type="AGR" id="FB:FBgn0010433"/>
<dbReference type="CTD" id="40975"/>
<dbReference type="FlyBase" id="FBgn0010433">
    <property type="gene designation" value="ato"/>
</dbReference>
<dbReference type="VEuPathDB" id="VectorBase:FBgn0010433"/>
<dbReference type="eggNOG" id="KOG4395">
    <property type="taxonomic scope" value="Eukaryota"/>
</dbReference>
<dbReference type="GeneTree" id="ENSGT00940000168200"/>
<dbReference type="HOGENOM" id="CLU_980979_0_0_1"/>
<dbReference type="InParanoid" id="P48987"/>
<dbReference type="OMA" id="FNPMAAY"/>
<dbReference type="OrthoDB" id="6161578at2759"/>
<dbReference type="PhylomeDB" id="P48987"/>
<dbReference type="SignaLink" id="P48987"/>
<dbReference type="BioGRID-ORCS" id="40975">
    <property type="hits" value="0 hits in 1 CRISPR screen"/>
</dbReference>
<dbReference type="GenomeRNAi" id="40975"/>
<dbReference type="PRO" id="PR:P48987"/>
<dbReference type="Proteomes" id="UP000000803">
    <property type="component" value="Chromosome 3R"/>
</dbReference>
<dbReference type="Bgee" id="FBgn0010433">
    <property type="expression patterns" value="Expressed in adult sense organ (Drosophila) and 29 other cell types or tissues"/>
</dbReference>
<dbReference type="ExpressionAtlas" id="P48987">
    <property type="expression patterns" value="baseline and differential"/>
</dbReference>
<dbReference type="GO" id="GO:0005634">
    <property type="term" value="C:nucleus"/>
    <property type="evidence" value="ECO:0000314"/>
    <property type="project" value="FlyBase"/>
</dbReference>
<dbReference type="GO" id="GO:0003700">
    <property type="term" value="F:DNA-binding transcription factor activity"/>
    <property type="evidence" value="ECO:0000318"/>
    <property type="project" value="GO_Central"/>
</dbReference>
<dbReference type="GO" id="GO:0070888">
    <property type="term" value="F:E-box binding"/>
    <property type="evidence" value="ECO:0000318"/>
    <property type="project" value="GO_Central"/>
</dbReference>
<dbReference type="GO" id="GO:0046982">
    <property type="term" value="F:protein heterodimerization activity"/>
    <property type="evidence" value="ECO:0000353"/>
    <property type="project" value="FlyBase"/>
</dbReference>
<dbReference type="GO" id="GO:0048801">
    <property type="term" value="P:antennal joint morphogenesis"/>
    <property type="evidence" value="ECO:0000315"/>
    <property type="project" value="FlyBase"/>
</dbReference>
<dbReference type="GO" id="GO:0048800">
    <property type="term" value="P:antennal morphogenesis"/>
    <property type="evidence" value="ECO:0000315"/>
    <property type="project" value="FlyBase"/>
</dbReference>
<dbReference type="GO" id="GO:0061564">
    <property type="term" value="P:axon development"/>
    <property type="evidence" value="ECO:0000318"/>
    <property type="project" value="GO_Central"/>
</dbReference>
<dbReference type="GO" id="GO:0001746">
    <property type="term" value="P:Bolwig's organ morphogenesis"/>
    <property type="evidence" value="ECO:0000270"/>
    <property type="project" value="FlyBase"/>
</dbReference>
<dbReference type="GO" id="GO:0007420">
    <property type="term" value="P:brain development"/>
    <property type="evidence" value="ECO:0000315"/>
    <property type="project" value="FlyBase"/>
</dbReference>
<dbReference type="GO" id="GO:0045165">
    <property type="term" value="P:cell fate commitment"/>
    <property type="evidence" value="ECO:0000315"/>
    <property type="project" value="FlyBase"/>
</dbReference>
<dbReference type="GO" id="GO:0007455">
    <property type="term" value="P:eye-antennal disc morphogenesis"/>
    <property type="evidence" value="ECO:0000315"/>
    <property type="project" value="FlyBase"/>
</dbReference>
<dbReference type="GO" id="GO:0001748">
    <property type="term" value="P:insect visual primordium development"/>
    <property type="evidence" value="ECO:0000315"/>
    <property type="project" value="FlyBase"/>
</dbReference>
<dbReference type="GO" id="GO:0045433">
    <property type="term" value="P:male courtship behavior, veined wing generated song production"/>
    <property type="evidence" value="ECO:0000315"/>
    <property type="project" value="FlyBase"/>
</dbReference>
<dbReference type="GO" id="GO:0007399">
    <property type="term" value="P:nervous system development"/>
    <property type="evidence" value="ECO:0000304"/>
    <property type="project" value="FlyBase"/>
</dbReference>
<dbReference type="GO" id="GO:0048663">
    <property type="term" value="P:neuron fate commitment"/>
    <property type="evidence" value="ECO:0000318"/>
    <property type="project" value="GO_Central"/>
</dbReference>
<dbReference type="GO" id="GO:0008038">
    <property type="term" value="P:neuron recognition"/>
    <property type="evidence" value="ECO:0000315"/>
    <property type="project" value="FlyBase"/>
</dbReference>
<dbReference type="GO" id="GO:0007438">
    <property type="term" value="P:oenocyte development"/>
    <property type="evidence" value="ECO:0000315"/>
    <property type="project" value="FlyBase"/>
</dbReference>
<dbReference type="GO" id="GO:0045944">
    <property type="term" value="P:positive regulation of transcription by RNA polymerase II"/>
    <property type="evidence" value="ECO:0000270"/>
    <property type="project" value="FlyBase"/>
</dbReference>
<dbReference type="GO" id="GO:0010608">
    <property type="term" value="P:post-transcriptional regulation of gene expression"/>
    <property type="evidence" value="ECO:0000315"/>
    <property type="project" value="FlyBase"/>
</dbReference>
<dbReference type="GO" id="GO:0007460">
    <property type="term" value="P:R8 cell fate commitment"/>
    <property type="evidence" value="ECO:0000315"/>
    <property type="project" value="FlyBase"/>
</dbReference>
<dbReference type="GO" id="GO:0007423">
    <property type="term" value="P:sensory organ development"/>
    <property type="evidence" value="ECO:0000315"/>
    <property type="project" value="FlyBase"/>
</dbReference>
<dbReference type="GO" id="GO:0016360">
    <property type="term" value="P:sensory organ precursor cell fate determination"/>
    <property type="evidence" value="ECO:0000314"/>
    <property type="project" value="FlyBase"/>
</dbReference>
<dbReference type="GO" id="GO:0007605">
    <property type="term" value="P:sensory perception of sound"/>
    <property type="evidence" value="ECO:0000315"/>
    <property type="project" value="FlyBase"/>
</dbReference>
<dbReference type="CDD" id="cd19715">
    <property type="entry name" value="bHLH_TS_amos_like"/>
    <property type="match status" value="1"/>
</dbReference>
<dbReference type="FunFam" id="4.10.280.10:FF:000025">
    <property type="entry name" value="protein atonal homolog 7"/>
    <property type="match status" value="1"/>
</dbReference>
<dbReference type="Gene3D" id="4.10.280.10">
    <property type="entry name" value="Helix-loop-helix DNA-binding domain"/>
    <property type="match status" value="1"/>
</dbReference>
<dbReference type="InterPro" id="IPR011598">
    <property type="entry name" value="bHLH_dom"/>
</dbReference>
<dbReference type="InterPro" id="IPR050359">
    <property type="entry name" value="bHLH_transcription_factors"/>
</dbReference>
<dbReference type="InterPro" id="IPR036638">
    <property type="entry name" value="HLH_DNA-bd_sf"/>
</dbReference>
<dbReference type="PANTHER" id="PTHR19290">
    <property type="entry name" value="BASIC HELIX-LOOP-HELIX PROTEIN NEUROGENIN-RELATED"/>
    <property type="match status" value="1"/>
</dbReference>
<dbReference type="PANTHER" id="PTHR19290:SF169">
    <property type="entry name" value="PROTEIN ATONAL"/>
    <property type="match status" value="1"/>
</dbReference>
<dbReference type="Pfam" id="PF00010">
    <property type="entry name" value="HLH"/>
    <property type="match status" value="1"/>
</dbReference>
<dbReference type="SMART" id="SM00353">
    <property type="entry name" value="HLH"/>
    <property type="match status" value="1"/>
</dbReference>
<dbReference type="SUPFAM" id="SSF47459">
    <property type="entry name" value="HLH, helix-loop-helix DNA-binding domain"/>
    <property type="match status" value="1"/>
</dbReference>
<dbReference type="PROSITE" id="PS50888">
    <property type="entry name" value="BHLH"/>
    <property type="match status" value="1"/>
</dbReference>
<accession>P48987</accession>
<accession>A0AQ36</accession>
<accession>A0AQ37</accession>
<accession>A0AQ43</accession>
<accession>Q9VHU0</accession>
<proteinExistence type="evidence at protein level"/>
<protein>
    <recommendedName>
        <fullName>Protein atonal</fullName>
    </recommendedName>
</protein>
<comment type="function">
    <text evidence="3 4">Developmental protein involved in neurogenesis. Required for the formation of chordotonal organs and photoreceptors. Seems to bind to E boxes. Specifically required for the photoreceptor R8 selection.</text>
</comment>
<comment type="subunit">
    <text>Efficient DNA binding requires dimerization with another bHLH protein. Forms a heterodimer with Daughterless.</text>
</comment>
<comment type="interaction">
    <interactant intactId="EBI-1639335">
        <id>P48987</id>
    </interactant>
    <interactant intactId="EBI-15658970">
        <id>Q91YV0</id>
        <label>Tcf4</label>
    </interactant>
    <organismsDiffer>true</organismsDiffer>
    <experiments>2</experiments>
</comment>
<comment type="subcellular location">
    <subcellularLocation>
        <location>Nucleus</location>
    </subcellularLocation>
</comment>
<comment type="tissue specificity">
    <text evidence="4">Proneural clusters and sense organ precursors of the chordotonal organs, optic furrow of the eye-antennal disk and developing brain lobe.</text>
</comment>
<reference key="1">
    <citation type="journal article" date="1993" name="Cell">
        <title>Atonal is a proneural gene that directs chordotonal organ formation in the Drosophila peripheral nervous system.</title>
        <authorList>
            <person name="Jarman A.P."/>
            <person name="Grau Y."/>
            <person name="Jan L.Y."/>
            <person name="Jan Y.N."/>
        </authorList>
    </citation>
    <scope>NUCLEOTIDE SEQUENCE [MRNA]</scope>
    <scope>FUNCTION</scope>
    <scope>TISSUE SPECIFICITY</scope>
    <source>
        <strain>Oregon-R</strain>
    </source>
</reference>
<reference key="2">
    <citation type="journal article" date="2006" name="Genetics">
        <title>Widespread adaptive evolution of Drosophila genes with sex-biased expression.</title>
        <authorList>
            <person name="Proeschel M."/>
            <person name="Zhang Z."/>
            <person name="Parsch J."/>
        </authorList>
    </citation>
    <scope>NUCLEOTIDE SEQUENCE [GENOMIC DNA]</scope>
    <source>
        <strain>ZBMEL131</strain>
        <strain>ZBMEL145</strain>
        <strain>ZBMEL157</strain>
        <strain>ZBMEL186</strain>
        <strain>ZBMEL191</strain>
        <strain>ZBMEL229</strain>
        <strain>ZBMEL377</strain>
        <strain>ZBMEL384</strain>
        <strain>ZBMEL398</strain>
        <strain>ZBMEL82</strain>
        <strain>ZBMEL84</strain>
        <strain>ZBMEL95</strain>
    </source>
</reference>
<reference key="3">
    <citation type="journal article" date="2000" name="Science">
        <title>The genome sequence of Drosophila melanogaster.</title>
        <authorList>
            <person name="Adams M.D."/>
            <person name="Celniker S.E."/>
            <person name="Holt R.A."/>
            <person name="Evans C.A."/>
            <person name="Gocayne J.D."/>
            <person name="Amanatides P.G."/>
            <person name="Scherer S.E."/>
            <person name="Li P.W."/>
            <person name="Hoskins R.A."/>
            <person name="Galle R.F."/>
            <person name="George R.A."/>
            <person name="Lewis S.E."/>
            <person name="Richards S."/>
            <person name="Ashburner M."/>
            <person name="Henderson S.N."/>
            <person name="Sutton G.G."/>
            <person name="Wortman J.R."/>
            <person name="Yandell M.D."/>
            <person name="Zhang Q."/>
            <person name="Chen L.X."/>
            <person name="Brandon R.C."/>
            <person name="Rogers Y.-H.C."/>
            <person name="Blazej R.G."/>
            <person name="Champe M."/>
            <person name="Pfeiffer B.D."/>
            <person name="Wan K.H."/>
            <person name="Doyle C."/>
            <person name="Baxter E.G."/>
            <person name="Helt G."/>
            <person name="Nelson C.R."/>
            <person name="Miklos G.L.G."/>
            <person name="Abril J.F."/>
            <person name="Agbayani A."/>
            <person name="An H.-J."/>
            <person name="Andrews-Pfannkoch C."/>
            <person name="Baldwin D."/>
            <person name="Ballew R.M."/>
            <person name="Basu A."/>
            <person name="Baxendale J."/>
            <person name="Bayraktaroglu L."/>
            <person name="Beasley E.M."/>
            <person name="Beeson K.Y."/>
            <person name="Benos P.V."/>
            <person name="Berman B.P."/>
            <person name="Bhandari D."/>
            <person name="Bolshakov S."/>
            <person name="Borkova D."/>
            <person name="Botchan M.R."/>
            <person name="Bouck J."/>
            <person name="Brokstein P."/>
            <person name="Brottier P."/>
            <person name="Burtis K.C."/>
            <person name="Busam D.A."/>
            <person name="Butler H."/>
            <person name="Cadieu E."/>
            <person name="Center A."/>
            <person name="Chandra I."/>
            <person name="Cherry J.M."/>
            <person name="Cawley S."/>
            <person name="Dahlke C."/>
            <person name="Davenport L.B."/>
            <person name="Davies P."/>
            <person name="de Pablos B."/>
            <person name="Delcher A."/>
            <person name="Deng Z."/>
            <person name="Mays A.D."/>
            <person name="Dew I."/>
            <person name="Dietz S.M."/>
            <person name="Dodson K."/>
            <person name="Doup L.E."/>
            <person name="Downes M."/>
            <person name="Dugan-Rocha S."/>
            <person name="Dunkov B.C."/>
            <person name="Dunn P."/>
            <person name="Durbin K.J."/>
            <person name="Evangelista C.C."/>
            <person name="Ferraz C."/>
            <person name="Ferriera S."/>
            <person name="Fleischmann W."/>
            <person name="Fosler C."/>
            <person name="Gabrielian A.E."/>
            <person name="Garg N.S."/>
            <person name="Gelbart W.M."/>
            <person name="Glasser K."/>
            <person name="Glodek A."/>
            <person name="Gong F."/>
            <person name="Gorrell J.H."/>
            <person name="Gu Z."/>
            <person name="Guan P."/>
            <person name="Harris M."/>
            <person name="Harris N.L."/>
            <person name="Harvey D.A."/>
            <person name="Heiman T.J."/>
            <person name="Hernandez J.R."/>
            <person name="Houck J."/>
            <person name="Hostin D."/>
            <person name="Houston K.A."/>
            <person name="Howland T.J."/>
            <person name="Wei M.-H."/>
            <person name="Ibegwam C."/>
            <person name="Jalali M."/>
            <person name="Kalush F."/>
            <person name="Karpen G.H."/>
            <person name="Ke Z."/>
            <person name="Kennison J.A."/>
            <person name="Ketchum K.A."/>
            <person name="Kimmel B.E."/>
            <person name="Kodira C.D."/>
            <person name="Kraft C.L."/>
            <person name="Kravitz S."/>
            <person name="Kulp D."/>
            <person name="Lai Z."/>
            <person name="Lasko P."/>
            <person name="Lei Y."/>
            <person name="Levitsky A.A."/>
            <person name="Li J.H."/>
            <person name="Li Z."/>
            <person name="Liang Y."/>
            <person name="Lin X."/>
            <person name="Liu X."/>
            <person name="Mattei B."/>
            <person name="McIntosh T.C."/>
            <person name="McLeod M.P."/>
            <person name="McPherson D."/>
            <person name="Merkulov G."/>
            <person name="Milshina N.V."/>
            <person name="Mobarry C."/>
            <person name="Morris J."/>
            <person name="Moshrefi A."/>
            <person name="Mount S.M."/>
            <person name="Moy M."/>
            <person name="Murphy B."/>
            <person name="Murphy L."/>
            <person name="Muzny D.M."/>
            <person name="Nelson D.L."/>
            <person name="Nelson D.R."/>
            <person name="Nelson K.A."/>
            <person name="Nixon K."/>
            <person name="Nusskern D.R."/>
            <person name="Pacleb J.M."/>
            <person name="Palazzolo M."/>
            <person name="Pittman G.S."/>
            <person name="Pan S."/>
            <person name="Pollard J."/>
            <person name="Puri V."/>
            <person name="Reese M.G."/>
            <person name="Reinert K."/>
            <person name="Remington K."/>
            <person name="Saunders R.D.C."/>
            <person name="Scheeler F."/>
            <person name="Shen H."/>
            <person name="Shue B.C."/>
            <person name="Siden-Kiamos I."/>
            <person name="Simpson M."/>
            <person name="Skupski M.P."/>
            <person name="Smith T.J."/>
            <person name="Spier E."/>
            <person name="Spradling A.C."/>
            <person name="Stapleton M."/>
            <person name="Strong R."/>
            <person name="Sun E."/>
            <person name="Svirskas R."/>
            <person name="Tector C."/>
            <person name="Turner R."/>
            <person name="Venter E."/>
            <person name="Wang A.H."/>
            <person name="Wang X."/>
            <person name="Wang Z.-Y."/>
            <person name="Wassarman D.A."/>
            <person name="Weinstock G.M."/>
            <person name="Weissenbach J."/>
            <person name="Williams S.M."/>
            <person name="Woodage T."/>
            <person name="Worley K.C."/>
            <person name="Wu D."/>
            <person name="Yang S."/>
            <person name="Yao Q.A."/>
            <person name="Ye J."/>
            <person name="Yeh R.-F."/>
            <person name="Zaveri J.S."/>
            <person name="Zhan M."/>
            <person name="Zhang G."/>
            <person name="Zhao Q."/>
            <person name="Zheng L."/>
            <person name="Zheng X.H."/>
            <person name="Zhong F.N."/>
            <person name="Zhong W."/>
            <person name="Zhou X."/>
            <person name="Zhu S.C."/>
            <person name="Zhu X."/>
            <person name="Smith H.O."/>
            <person name="Gibbs R.A."/>
            <person name="Myers E.W."/>
            <person name="Rubin G.M."/>
            <person name="Venter J.C."/>
        </authorList>
    </citation>
    <scope>NUCLEOTIDE SEQUENCE [LARGE SCALE GENOMIC DNA]</scope>
    <source>
        <strain>Berkeley</strain>
    </source>
</reference>
<reference key="4">
    <citation type="journal article" date="2002" name="Genome Biol.">
        <title>Annotation of the Drosophila melanogaster euchromatic genome: a systematic review.</title>
        <authorList>
            <person name="Misra S."/>
            <person name="Crosby M.A."/>
            <person name="Mungall C.J."/>
            <person name="Matthews B.B."/>
            <person name="Campbell K.S."/>
            <person name="Hradecky P."/>
            <person name="Huang Y."/>
            <person name="Kaminker J.S."/>
            <person name="Millburn G.H."/>
            <person name="Prochnik S.E."/>
            <person name="Smith C.D."/>
            <person name="Tupy J.L."/>
            <person name="Whitfield E.J."/>
            <person name="Bayraktaroglu L."/>
            <person name="Berman B.P."/>
            <person name="Bettencourt B.R."/>
            <person name="Celniker S.E."/>
            <person name="de Grey A.D.N.J."/>
            <person name="Drysdale R.A."/>
            <person name="Harris N.L."/>
            <person name="Richter J."/>
            <person name="Russo S."/>
            <person name="Schroeder A.J."/>
            <person name="Shu S.Q."/>
            <person name="Stapleton M."/>
            <person name="Yamada C."/>
            <person name="Ashburner M."/>
            <person name="Gelbart W.M."/>
            <person name="Rubin G.M."/>
            <person name="Lewis S.E."/>
        </authorList>
    </citation>
    <scope>GENOME REANNOTATION</scope>
    <source>
        <strain>Berkeley</strain>
    </source>
</reference>
<reference key="5">
    <citation type="journal article" date="1994" name="Nature">
        <title>Atonal is the proneural gene for Drosophila photoreceptors.</title>
        <authorList>
            <person name="Jarman A.P."/>
            <person name="Grell E.H."/>
            <person name="Ackerman L."/>
            <person name="Jan L.Y."/>
            <person name="Jan Y.N."/>
        </authorList>
    </citation>
    <scope>FUNCTION</scope>
</reference>
<name>ATO_DROME</name>
<sequence length="312" mass="34116">MSSSEIYRYYYKTSEDLQGFKTAAAEPYFNPMAAYNPGVTHYQFNGNTLASSSNYLSANGFISFEQASSDGWISSSPASHRSESPEYVDLNTMYNGGCNNMAQNQQYGMIMEQSVVSTAPAIPVASPPAVEVMGSSNVGTCKTIPASAGPKPKRSYTKKNQPSTTATSTPTAAAESSASVNLYTEEFQNFDFDNSALFDDSVEDDEDLMLFSGGEDFDGNDGSFDLADGENQDAAAGGSGKKRRGKQITPVVKRKRRLAANARERRRMQNLNQAFDRLRQYLPCLGNDRQLSKHETLQMAQTYISALGDLLR</sequence>
<evidence type="ECO:0000255" key="1">
    <source>
        <dbReference type="PROSITE-ProRule" id="PRU00981"/>
    </source>
</evidence>
<evidence type="ECO:0000256" key="2">
    <source>
        <dbReference type="SAM" id="MobiDB-lite"/>
    </source>
</evidence>
<evidence type="ECO:0000269" key="3">
    <source>
    </source>
</evidence>
<evidence type="ECO:0000269" key="4">
    <source>
    </source>
</evidence>
<gene>
    <name type="primary">ato</name>
    <name type="ORF">CG7508</name>
</gene>
<keyword id="KW-0217">Developmental protein</keyword>
<keyword id="KW-0221">Differentiation</keyword>
<keyword id="KW-0238">DNA-binding</keyword>
<keyword id="KW-0524">Neurogenesis</keyword>
<keyword id="KW-0539">Nucleus</keyword>
<keyword id="KW-1185">Reference proteome</keyword>
<keyword id="KW-0804">Transcription</keyword>
<keyword id="KW-0805">Transcription regulation</keyword>